<comment type="function">
    <text evidence="1">Located at the top of the head of the 30S subunit, it contacts several helices of the 16S rRNA. In the 70S ribosome it contacts the 23S rRNA (bridge B1a) and protein L5 of the 50S subunit (bridge B1b), connecting the 2 subunits; these bridges are implicated in subunit movement. Contacts the tRNAs in the A and P-sites.</text>
</comment>
<comment type="subunit">
    <text evidence="1">Part of the 30S ribosomal subunit. Forms a loose heterodimer with protein S19. Forms two bridges to the 50S subunit in the 70S ribosome.</text>
</comment>
<comment type="similarity">
    <text evidence="1">Belongs to the universal ribosomal protein uS13 family.</text>
</comment>
<feature type="chain" id="PRO_1000086248" description="Small ribosomal subunit protein uS13">
    <location>
        <begin position="1"/>
        <end position="123"/>
    </location>
</feature>
<feature type="region of interest" description="Disordered" evidence="2">
    <location>
        <begin position="97"/>
        <end position="123"/>
    </location>
</feature>
<gene>
    <name evidence="1" type="primary">rpsM</name>
    <name type="ordered locus">PTH_0345</name>
</gene>
<dbReference type="EMBL" id="AP009389">
    <property type="protein sequence ID" value="BAF58526.1"/>
    <property type="molecule type" value="Genomic_DNA"/>
</dbReference>
<dbReference type="SMR" id="A5D5E5"/>
<dbReference type="STRING" id="370438.PTH_0345"/>
<dbReference type="KEGG" id="pth:PTH_0345"/>
<dbReference type="eggNOG" id="COG0099">
    <property type="taxonomic scope" value="Bacteria"/>
</dbReference>
<dbReference type="HOGENOM" id="CLU_103849_1_2_9"/>
<dbReference type="Proteomes" id="UP000006556">
    <property type="component" value="Chromosome"/>
</dbReference>
<dbReference type="GO" id="GO:0005829">
    <property type="term" value="C:cytosol"/>
    <property type="evidence" value="ECO:0007669"/>
    <property type="project" value="TreeGrafter"/>
</dbReference>
<dbReference type="GO" id="GO:0015935">
    <property type="term" value="C:small ribosomal subunit"/>
    <property type="evidence" value="ECO:0007669"/>
    <property type="project" value="TreeGrafter"/>
</dbReference>
<dbReference type="GO" id="GO:0019843">
    <property type="term" value="F:rRNA binding"/>
    <property type="evidence" value="ECO:0007669"/>
    <property type="project" value="UniProtKB-UniRule"/>
</dbReference>
<dbReference type="GO" id="GO:0003735">
    <property type="term" value="F:structural constituent of ribosome"/>
    <property type="evidence" value="ECO:0007669"/>
    <property type="project" value="InterPro"/>
</dbReference>
<dbReference type="GO" id="GO:0000049">
    <property type="term" value="F:tRNA binding"/>
    <property type="evidence" value="ECO:0007669"/>
    <property type="project" value="UniProtKB-UniRule"/>
</dbReference>
<dbReference type="GO" id="GO:0006412">
    <property type="term" value="P:translation"/>
    <property type="evidence" value="ECO:0007669"/>
    <property type="project" value="UniProtKB-UniRule"/>
</dbReference>
<dbReference type="FunFam" id="1.10.8.50:FF:000001">
    <property type="entry name" value="30S ribosomal protein S13"/>
    <property type="match status" value="1"/>
</dbReference>
<dbReference type="FunFam" id="4.10.910.10:FF:000001">
    <property type="entry name" value="30S ribosomal protein S13"/>
    <property type="match status" value="1"/>
</dbReference>
<dbReference type="Gene3D" id="1.10.8.50">
    <property type="match status" value="1"/>
</dbReference>
<dbReference type="Gene3D" id="4.10.910.10">
    <property type="entry name" value="30s ribosomal protein s13, domain 2"/>
    <property type="match status" value="1"/>
</dbReference>
<dbReference type="HAMAP" id="MF_01315">
    <property type="entry name" value="Ribosomal_uS13"/>
    <property type="match status" value="1"/>
</dbReference>
<dbReference type="InterPro" id="IPR027437">
    <property type="entry name" value="Rbsml_uS13_C"/>
</dbReference>
<dbReference type="InterPro" id="IPR001892">
    <property type="entry name" value="Ribosomal_uS13"/>
</dbReference>
<dbReference type="InterPro" id="IPR010979">
    <property type="entry name" value="Ribosomal_uS13-like_H2TH"/>
</dbReference>
<dbReference type="InterPro" id="IPR019980">
    <property type="entry name" value="Ribosomal_uS13_bac-type"/>
</dbReference>
<dbReference type="InterPro" id="IPR018269">
    <property type="entry name" value="Ribosomal_uS13_CS"/>
</dbReference>
<dbReference type="NCBIfam" id="TIGR03631">
    <property type="entry name" value="uS13_bact"/>
    <property type="match status" value="1"/>
</dbReference>
<dbReference type="PANTHER" id="PTHR10871">
    <property type="entry name" value="30S RIBOSOMAL PROTEIN S13/40S RIBOSOMAL PROTEIN S18"/>
    <property type="match status" value="1"/>
</dbReference>
<dbReference type="PANTHER" id="PTHR10871:SF1">
    <property type="entry name" value="SMALL RIBOSOMAL SUBUNIT PROTEIN US13M"/>
    <property type="match status" value="1"/>
</dbReference>
<dbReference type="Pfam" id="PF00416">
    <property type="entry name" value="Ribosomal_S13"/>
    <property type="match status" value="1"/>
</dbReference>
<dbReference type="PIRSF" id="PIRSF002134">
    <property type="entry name" value="Ribosomal_S13"/>
    <property type="match status" value="1"/>
</dbReference>
<dbReference type="SUPFAM" id="SSF46946">
    <property type="entry name" value="S13-like H2TH domain"/>
    <property type="match status" value="1"/>
</dbReference>
<dbReference type="PROSITE" id="PS00646">
    <property type="entry name" value="RIBOSOMAL_S13_1"/>
    <property type="match status" value="1"/>
</dbReference>
<dbReference type="PROSITE" id="PS50159">
    <property type="entry name" value="RIBOSOMAL_S13_2"/>
    <property type="match status" value="1"/>
</dbReference>
<reference key="1">
    <citation type="journal article" date="2008" name="Genome Res.">
        <title>The genome of Pelotomaculum thermopropionicum reveals niche-associated evolution in anaerobic microbiota.</title>
        <authorList>
            <person name="Kosaka T."/>
            <person name="Kato S."/>
            <person name="Shimoyama T."/>
            <person name="Ishii S."/>
            <person name="Abe T."/>
            <person name="Watanabe K."/>
        </authorList>
    </citation>
    <scope>NUCLEOTIDE SEQUENCE [LARGE SCALE GENOMIC DNA]</scope>
    <source>
        <strain>DSM 13744 / JCM 10971 / SI</strain>
    </source>
</reference>
<accession>A5D5E5</accession>
<evidence type="ECO:0000255" key="1">
    <source>
        <dbReference type="HAMAP-Rule" id="MF_01315"/>
    </source>
</evidence>
<evidence type="ECO:0000256" key="2">
    <source>
        <dbReference type="SAM" id="MobiDB-lite"/>
    </source>
</evidence>
<evidence type="ECO:0000305" key="3"/>
<name>RS13_PELTS</name>
<sequence>MARIAGVDLPRDKRVEIALTYIYGIGKPTSQKILAQSGVNPDTRVRNLTEEEINKLRDIIEKNYKVEGDLRREVALNIKRLIEIGCYRGLRHRRGLPVRGQRTKTNARTRKGPRKTVGVRRKK</sequence>
<proteinExistence type="inferred from homology"/>
<organism>
    <name type="scientific">Pelotomaculum thermopropionicum (strain DSM 13744 / JCM 10971 / SI)</name>
    <dbReference type="NCBI Taxonomy" id="370438"/>
    <lineage>
        <taxon>Bacteria</taxon>
        <taxon>Bacillati</taxon>
        <taxon>Bacillota</taxon>
        <taxon>Clostridia</taxon>
        <taxon>Eubacteriales</taxon>
        <taxon>Desulfotomaculaceae</taxon>
        <taxon>Pelotomaculum</taxon>
    </lineage>
</organism>
<protein>
    <recommendedName>
        <fullName evidence="1">Small ribosomal subunit protein uS13</fullName>
    </recommendedName>
    <alternativeName>
        <fullName evidence="3">30S ribosomal protein S13</fullName>
    </alternativeName>
</protein>
<keyword id="KW-1185">Reference proteome</keyword>
<keyword id="KW-0687">Ribonucleoprotein</keyword>
<keyword id="KW-0689">Ribosomal protein</keyword>
<keyword id="KW-0694">RNA-binding</keyword>
<keyword id="KW-0699">rRNA-binding</keyword>
<keyword id="KW-0820">tRNA-binding</keyword>